<comment type="function">
    <text evidence="1">Binds to the 23S rRNA.</text>
</comment>
<comment type="subunit">
    <text evidence="1">Part of the 50S ribosomal subunit.</text>
</comment>
<comment type="similarity">
    <text evidence="1">Belongs to the universal ribosomal protein uL15 family.</text>
</comment>
<feature type="chain" id="PRO_0000251564" description="Large ribosomal subunit protein uL15">
    <location>
        <begin position="1"/>
        <end position="144"/>
    </location>
</feature>
<feature type="region of interest" description="Disordered" evidence="2">
    <location>
        <begin position="1"/>
        <end position="53"/>
    </location>
</feature>
<feature type="compositionally biased region" description="Gly residues" evidence="2">
    <location>
        <begin position="21"/>
        <end position="31"/>
    </location>
</feature>
<accession>Q2NQP1</accession>
<organism>
    <name type="scientific">Sodalis glossinidius (strain morsitans)</name>
    <dbReference type="NCBI Taxonomy" id="343509"/>
    <lineage>
        <taxon>Bacteria</taxon>
        <taxon>Pseudomonadati</taxon>
        <taxon>Pseudomonadota</taxon>
        <taxon>Gammaproteobacteria</taxon>
        <taxon>Enterobacterales</taxon>
        <taxon>Bruguierivoracaceae</taxon>
        <taxon>Sodalis</taxon>
    </lineage>
</organism>
<proteinExistence type="inferred from homology"/>
<evidence type="ECO:0000255" key="1">
    <source>
        <dbReference type="HAMAP-Rule" id="MF_01341"/>
    </source>
</evidence>
<evidence type="ECO:0000256" key="2">
    <source>
        <dbReference type="SAM" id="MobiDB-lite"/>
    </source>
</evidence>
<evidence type="ECO:0000305" key="3"/>
<reference key="1">
    <citation type="journal article" date="2006" name="Genome Res.">
        <title>Massive genome erosion and functional adaptations provide insights into the symbiotic lifestyle of Sodalis glossinidius in the tsetse host.</title>
        <authorList>
            <person name="Toh H."/>
            <person name="Weiss B.L."/>
            <person name="Perkin S.A.H."/>
            <person name="Yamashita A."/>
            <person name="Oshima K."/>
            <person name="Hattori M."/>
            <person name="Aksoy S."/>
        </authorList>
    </citation>
    <scope>NUCLEOTIDE SEQUENCE [LARGE SCALE GENOMIC DNA]</scope>
    <source>
        <strain>morsitans</strain>
    </source>
</reference>
<protein>
    <recommendedName>
        <fullName evidence="1">Large ribosomal subunit protein uL15</fullName>
    </recommendedName>
    <alternativeName>
        <fullName evidence="3">50S ribosomal protein L15</fullName>
    </alternativeName>
</protein>
<dbReference type="EMBL" id="AP008232">
    <property type="protein sequence ID" value="BAE75534.1"/>
    <property type="molecule type" value="Genomic_DNA"/>
</dbReference>
<dbReference type="RefSeq" id="WP_011412069.1">
    <property type="nucleotide sequence ID" value="NC_007712.1"/>
</dbReference>
<dbReference type="SMR" id="Q2NQP1"/>
<dbReference type="STRING" id="343509.SG2259"/>
<dbReference type="KEGG" id="sgl:SG2259"/>
<dbReference type="eggNOG" id="COG0200">
    <property type="taxonomic scope" value="Bacteria"/>
</dbReference>
<dbReference type="HOGENOM" id="CLU_055188_4_2_6"/>
<dbReference type="OrthoDB" id="9810293at2"/>
<dbReference type="BioCyc" id="SGLO343509:SGP1_RS20745-MONOMER"/>
<dbReference type="Proteomes" id="UP000001932">
    <property type="component" value="Chromosome"/>
</dbReference>
<dbReference type="GO" id="GO:0022625">
    <property type="term" value="C:cytosolic large ribosomal subunit"/>
    <property type="evidence" value="ECO:0007669"/>
    <property type="project" value="TreeGrafter"/>
</dbReference>
<dbReference type="GO" id="GO:0019843">
    <property type="term" value="F:rRNA binding"/>
    <property type="evidence" value="ECO:0007669"/>
    <property type="project" value="UniProtKB-UniRule"/>
</dbReference>
<dbReference type="GO" id="GO:0003735">
    <property type="term" value="F:structural constituent of ribosome"/>
    <property type="evidence" value="ECO:0007669"/>
    <property type="project" value="InterPro"/>
</dbReference>
<dbReference type="GO" id="GO:0006412">
    <property type="term" value="P:translation"/>
    <property type="evidence" value="ECO:0007669"/>
    <property type="project" value="UniProtKB-UniRule"/>
</dbReference>
<dbReference type="FunFam" id="3.100.10.10:FF:000003">
    <property type="entry name" value="50S ribosomal protein L15"/>
    <property type="match status" value="1"/>
</dbReference>
<dbReference type="Gene3D" id="3.100.10.10">
    <property type="match status" value="1"/>
</dbReference>
<dbReference type="HAMAP" id="MF_01341">
    <property type="entry name" value="Ribosomal_uL15"/>
    <property type="match status" value="1"/>
</dbReference>
<dbReference type="InterPro" id="IPR030878">
    <property type="entry name" value="Ribosomal_uL15"/>
</dbReference>
<dbReference type="InterPro" id="IPR021131">
    <property type="entry name" value="Ribosomal_uL15/eL18"/>
</dbReference>
<dbReference type="InterPro" id="IPR036227">
    <property type="entry name" value="Ribosomal_uL15/eL18_sf"/>
</dbReference>
<dbReference type="InterPro" id="IPR005749">
    <property type="entry name" value="Ribosomal_uL15_bac-type"/>
</dbReference>
<dbReference type="InterPro" id="IPR001196">
    <property type="entry name" value="Ribosomal_uL15_CS"/>
</dbReference>
<dbReference type="NCBIfam" id="TIGR01071">
    <property type="entry name" value="rplO_bact"/>
    <property type="match status" value="1"/>
</dbReference>
<dbReference type="PANTHER" id="PTHR12934">
    <property type="entry name" value="50S RIBOSOMAL PROTEIN L15"/>
    <property type="match status" value="1"/>
</dbReference>
<dbReference type="PANTHER" id="PTHR12934:SF11">
    <property type="entry name" value="LARGE RIBOSOMAL SUBUNIT PROTEIN UL15M"/>
    <property type="match status" value="1"/>
</dbReference>
<dbReference type="Pfam" id="PF00828">
    <property type="entry name" value="Ribosomal_L27A"/>
    <property type="match status" value="1"/>
</dbReference>
<dbReference type="SUPFAM" id="SSF52080">
    <property type="entry name" value="Ribosomal proteins L15p and L18e"/>
    <property type="match status" value="1"/>
</dbReference>
<dbReference type="PROSITE" id="PS00475">
    <property type="entry name" value="RIBOSOMAL_L15"/>
    <property type="match status" value="1"/>
</dbReference>
<keyword id="KW-0687">Ribonucleoprotein</keyword>
<keyword id="KW-0689">Ribosomal protein</keyword>
<keyword id="KW-0694">RNA-binding</keyword>
<keyword id="KW-0699">rRNA-binding</keyword>
<sequence>MRLNTLSPAEGSKHASKRPGRGIGSGLGKTGGRGHKGQKSRSGGGVRRGFEGGQMPLYRRLPKFGFTSRKSMVTAEIRLSDLAHVEGDVVDLNTLKAANIVGIQTEFAKIMLSGEVKRAVTIRGLRVSKGARAAIEAAGGKIEE</sequence>
<gene>
    <name evidence="1" type="primary">rplO</name>
    <name type="ordered locus">SG2259</name>
</gene>
<name>RL15_SODGM</name>